<organism>
    <name type="scientific">Methanocaldococcus jannaschii (strain ATCC 43067 / DSM 2661 / JAL-1 / JCM 10045 / NBRC 100440)</name>
    <name type="common">Methanococcus jannaschii</name>
    <dbReference type="NCBI Taxonomy" id="243232"/>
    <lineage>
        <taxon>Archaea</taxon>
        <taxon>Methanobacteriati</taxon>
        <taxon>Methanobacteriota</taxon>
        <taxon>Methanomada group</taxon>
        <taxon>Methanococci</taxon>
        <taxon>Methanococcales</taxon>
        <taxon>Methanocaldococcaceae</taxon>
        <taxon>Methanocaldococcus</taxon>
    </lineage>
</organism>
<gene>
    <name type="ordered locus">MJ0556</name>
</gene>
<reference key="1">
    <citation type="journal article" date="1996" name="Science">
        <title>Complete genome sequence of the methanogenic archaeon, Methanococcus jannaschii.</title>
        <authorList>
            <person name="Bult C.J."/>
            <person name="White O."/>
            <person name="Olsen G.J."/>
            <person name="Zhou L."/>
            <person name="Fleischmann R.D."/>
            <person name="Sutton G.G."/>
            <person name="Blake J.A."/>
            <person name="FitzGerald L.M."/>
            <person name="Clayton R.A."/>
            <person name="Gocayne J.D."/>
            <person name="Kerlavage A.R."/>
            <person name="Dougherty B.A."/>
            <person name="Tomb J.-F."/>
            <person name="Adams M.D."/>
            <person name="Reich C.I."/>
            <person name="Overbeek R."/>
            <person name="Kirkness E.F."/>
            <person name="Weinstock K.G."/>
            <person name="Merrick J.M."/>
            <person name="Glodek A."/>
            <person name="Scott J.L."/>
            <person name="Geoghagen N.S.M."/>
            <person name="Weidman J.F."/>
            <person name="Fuhrmann J.L."/>
            <person name="Nguyen D."/>
            <person name="Utterback T.R."/>
            <person name="Kelley J.M."/>
            <person name="Peterson J.D."/>
            <person name="Sadow P.W."/>
            <person name="Hanna M.C."/>
            <person name="Cotton M.D."/>
            <person name="Roberts K.M."/>
            <person name="Hurst M.A."/>
            <person name="Kaine B.P."/>
            <person name="Borodovsky M."/>
            <person name="Klenk H.-P."/>
            <person name="Fraser C.M."/>
            <person name="Smith H.O."/>
            <person name="Woese C.R."/>
            <person name="Venter J.C."/>
        </authorList>
    </citation>
    <scope>NUCLEOTIDE SEQUENCE [LARGE SCALE GENOMIC DNA]</scope>
    <source>
        <strain>ATCC 43067 / DSM 2661 / JAL-1 / JCM 10045 / NBRC 100440</strain>
    </source>
</reference>
<reference key="2">
    <citation type="journal article" date="2004" name="Proc. Natl. Acad. Sci. U.S.A.">
        <title>Targeted analysis and discovery of posttranslational modifications in proteins from methanogenic archaea by top-down MS.</title>
        <authorList>
            <person name="Forbes A.J."/>
            <person name="Patrie S.M."/>
            <person name="Taylor G.K."/>
            <person name="Kim Y.-B."/>
            <person name="Jiang L."/>
            <person name="Kelleher N.L."/>
        </authorList>
    </citation>
    <scope>IDENTIFICATION BY MASS SPECTROMETRY</scope>
    <scope>METHYLATION</scope>
</reference>
<protein>
    <recommendedName>
        <fullName>Methylated protein MJ0556</fullName>
    </recommendedName>
</protein>
<accession>Q57976</accession>
<dbReference type="EMBL" id="L77117">
    <property type="protein sequence ID" value="AAB98550.1"/>
    <property type="status" value="ALT_INIT"/>
    <property type="molecule type" value="Genomic_DNA"/>
</dbReference>
<dbReference type="PIR" id="D64369">
    <property type="entry name" value="D64369"/>
</dbReference>
<dbReference type="RefSeq" id="WP_064496541.1">
    <property type="nucleotide sequence ID" value="NC_000909.1"/>
</dbReference>
<dbReference type="SMR" id="Q57976"/>
<dbReference type="STRING" id="243232.MJ_0556"/>
<dbReference type="PaxDb" id="243232-MJ_0556"/>
<dbReference type="EnsemblBacteria" id="AAB98550">
    <property type="protein sequence ID" value="AAB98550"/>
    <property type="gene ID" value="MJ_0556"/>
</dbReference>
<dbReference type="GeneID" id="1451421"/>
<dbReference type="KEGG" id="mja:MJ_0556"/>
<dbReference type="eggNOG" id="arCOG02569">
    <property type="taxonomic scope" value="Archaea"/>
</dbReference>
<dbReference type="HOGENOM" id="CLU_1431673_0_0_2"/>
<dbReference type="InParanoid" id="Q57976"/>
<dbReference type="OrthoDB" id="8919at2157"/>
<dbReference type="PhylomeDB" id="Q57976"/>
<dbReference type="Proteomes" id="UP000000805">
    <property type="component" value="Chromosome"/>
</dbReference>
<dbReference type="CDD" id="cd02205">
    <property type="entry name" value="CBS_pair_SF"/>
    <property type="match status" value="1"/>
</dbReference>
<dbReference type="Gene3D" id="3.10.580.10">
    <property type="entry name" value="CBS-domain"/>
    <property type="match status" value="1"/>
</dbReference>
<dbReference type="InterPro" id="IPR000644">
    <property type="entry name" value="CBS_dom"/>
</dbReference>
<dbReference type="InterPro" id="IPR046342">
    <property type="entry name" value="CBS_dom_sf"/>
</dbReference>
<dbReference type="InterPro" id="IPR051257">
    <property type="entry name" value="Diverse_CBS-Domain"/>
</dbReference>
<dbReference type="PANTHER" id="PTHR43080:SF2">
    <property type="entry name" value="CBS DOMAIN-CONTAINING PROTEIN"/>
    <property type="match status" value="1"/>
</dbReference>
<dbReference type="PANTHER" id="PTHR43080">
    <property type="entry name" value="CBS DOMAIN-CONTAINING PROTEIN CBSX3, MITOCHONDRIAL"/>
    <property type="match status" value="1"/>
</dbReference>
<dbReference type="Pfam" id="PF00571">
    <property type="entry name" value="CBS"/>
    <property type="match status" value="2"/>
</dbReference>
<dbReference type="SMART" id="SM00116">
    <property type="entry name" value="CBS"/>
    <property type="match status" value="2"/>
</dbReference>
<dbReference type="SUPFAM" id="SSF54631">
    <property type="entry name" value="CBS-domain pair"/>
    <property type="match status" value="1"/>
</dbReference>
<dbReference type="PROSITE" id="PS51371">
    <property type="entry name" value="CBS"/>
    <property type="match status" value="2"/>
</dbReference>
<dbReference type="PROSITE" id="PS00092">
    <property type="entry name" value="N6_MTASE"/>
    <property type="match status" value="1"/>
</dbReference>
<feature type="initiator methionine" description="Removed" evidence="3">
    <location>
        <position position="1"/>
    </location>
</feature>
<feature type="chain" id="PRO_0000106929" description="Methylated protein MJ0556">
    <location>
        <begin position="2"/>
        <end position="174"/>
    </location>
</feature>
<feature type="domain" description="CBS 1" evidence="1">
    <location>
        <begin position="28"/>
        <end position="87"/>
    </location>
</feature>
<feature type="domain" description="CBS 2" evidence="1">
    <location>
        <begin position="91"/>
        <end position="156"/>
    </location>
</feature>
<sequence>MSKFVKLHLVRTLNKYKELQKIRVKDVMISGDVIITTPEKTIKEIFDEMIKHNISGMPVVDDRGVMIGFITLREIRKYMTSHPYLNVGEVMLKNPPYTTADEDIITAFEKMIESNKKLDQLPVINTKYPEKILGKLEGIIFMEDIIKLLYENIIKELKTLVSFYNHNTEIKIKY</sequence>
<keyword id="KW-0129">CBS domain</keyword>
<keyword id="KW-0488">Methylation</keyword>
<keyword id="KW-1185">Reference proteome</keyword>
<keyword id="KW-0677">Repeat</keyword>
<proteinExistence type="evidence at protein level"/>
<comment type="PTM">
    <text evidence="2">Methylated at an undetermined residue between Ser-2 and Asp-26.</text>
</comment>
<comment type="mass spectrometry"/>
<comment type="sequence caution" evidence="3">
    <conflict type="erroneous initiation">
        <sequence resource="EMBL-CDS" id="AAB98550"/>
    </conflict>
</comment>
<evidence type="ECO:0000255" key="1">
    <source>
        <dbReference type="PROSITE-ProRule" id="PRU00703"/>
    </source>
</evidence>
<evidence type="ECO:0000269" key="2">
    <source>
    </source>
</evidence>
<evidence type="ECO:0000305" key="3"/>
<name>M556_METJA</name>